<sequence length="406" mass="44037">MNFPIERVRADFPLLSRQVNGQPLVYLDSAASAQKPQAVIDKELHFYRDGYAAVHRGIHSLSAEAIQQMEAVRTQVADFIHAASAEEIIFVRGTTEAINLVANSYGRHFLAAGDSIIITEMEHHANIVPWQMLAQDLGVEIRVWPLTATGELEITALAALIDDTTRLLAVTQVSNVLGTVNPIKDIVAQAKAAGLVVLVDGAQAVMHQPVDVQALGCDFYVFSGHKLYGPSGIGILYGKSALLQQMPPWEGGGAMIKTVSLTQGTTFADAPWRFEAGSPNTAGIMGLGAAIDYVTELGLLPIQQYEQSLMHYALAQLSQIKSLTLYGPTERAGVIAFNLGQHHAYDVGSFLDQYGIAIRTGHHCAMPLMAFYQVPSMCRASLALYNTREDVDRLVAGLQRIEKLLG</sequence>
<keyword id="KW-0963">Cytoplasm</keyword>
<keyword id="KW-0456">Lyase</keyword>
<keyword id="KW-0663">Pyridoxal phosphate</keyword>
<keyword id="KW-0808">Transferase</keyword>
<comment type="function">
    <text evidence="1">Cysteine desulfurases mobilize the sulfur from L-cysteine to yield L-alanine, an essential step in sulfur metabolism for biosynthesis of a variety of sulfur-containing biomolecules. Component of the suf operon, which is activated and required under specific conditions such as oxidative stress and iron limitation. Acts as a potent selenocysteine lyase in vitro, that mobilizes selenium from L-selenocysteine. Selenocysteine lyase activity is however unsure in vivo.</text>
</comment>
<comment type="catalytic activity">
    <reaction evidence="1">
        <text>(sulfur carrier)-H + L-cysteine = (sulfur carrier)-SH + L-alanine</text>
        <dbReference type="Rhea" id="RHEA:43892"/>
        <dbReference type="Rhea" id="RHEA-COMP:14737"/>
        <dbReference type="Rhea" id="RHEA-COMP:14739"/>
        <dbReference type="ChEBI" id="CHEBI:29917"/>
        <dbReference type="ChEBI" id="CHEBI:35235"/>
        <dbReference type="ChEBI" id="CHEBI:57972"/>
        <dbReference type="ChEBI" id="CHEBI:64428"/>
        <dbReference type="EC" id="2.8.1.7"/>
    </reaction>
</comment>
<comment type="catalytic activity">
    <reaction evidence="1">
        <text>L-selenocysteine + AH2 = hydrogenselenide + L-alanine + A + H(+)</text>
        <dbReference type="Rhea" id="RHEA:11632"/>
        <dbReference type="ChEBI" id="CHEBI:13193"/>
        <dbReference type="ChEBI" id="CHEBI:15378"/>
        <dbReference type="ChEBI" id="CHEBI:17499"/>
        <dbReference type="ChEBI" id="CHEBI:29317"/>
        <dbReference type="ChEBI" id="CHEBI:57843"/>
        <dbReference type="ChEBI" id="CHEBI:57972"/>
        <dbReference type="EC" id="4.4.1.16"/>
    </reaction>
</comment>
<comment type="cofactor">
    <cofactor evidence="1">
        <name>pyridoxal 5'-phosphate</name>
        <dbReference type="ChEBI" id="CHEBI:597326"/>
    </cofactor>
</comment>
<comment type="pathway">
    <text evidence="1">Cofactor biosynthesis; iron-sulfur cluster biosynthesis.</text>
</comment>
<comment type="subunit">
    <text evidence="1">Homodimer. Interacts with SufE and the SufBCD complex composed of SufB, SufC and SufD. The interaction with SufE is required to mediate the direct transfer of the sulfur atom from the S-sulfanylcysteine.</text>
</comment>
<comment type="subcellular location">
    <subcellularLocation>
        <location evidence="1">Cytoplasm</location>
    </subcellularLocation>
</comment>
<comment type="similarity">
    <text evidence="1">Belongs to the class-V pyridoxal-phosphate-dependent aminotransferase family. Csd subfamily.</text>
</comment>
<evidence type="ECO:0000255" key="1">
    <source>
        <dbReference type="HAMAP-Rule" id="MF_01831"/>
    </source>
</evidence>
<dbReference type="EC" id="2.8.1.7" evidence="1"/>
<dbReference type="EC" id="4.4.1.16" evidence="1"/>
<dbReference type="EMBL" id="CP000901">
    <property type="protein sequence ID" value="ABX86704.1"/>
    <property type="molecule type" value="Genomic_DNA"/>
</dbReference>
<dbReference type="RefSeq" id="WP_012229769.1">
    <property type="nucleotide sequence ID" value="NC_010159.1"/>
</dbReference>
<dbReference type="SMR" id="A9QZC9"/>
<dbReference type="KEGG" id="ypg:YpAngola_A2590"/>
<dbReference type="PATRIC" id="fig|349746.12.peg.3614"/>
<dbReference type="UniPathway" id="UPA00266"/>
<dbReference type="GO" id="GO:0005737">
    <property type="term" value="C:cytoplasm"/>
    <property type="evidence" value="ECO:0007669"/>
    <property type="project" value="UniProtKB-SubCell"/>
</dbReference>
<dbReference type="GO" id="GO:0031071">
    <property type="term" value="F:cysteine desulfurase activity"/>
    <property type="evidence" value="ECO:0007669"/>
    <property type="project" value="UniProtKB-UniRule"/>
</dbReference>
<dbReference type="GO" id="GO:0030170">
    <property type="term" value="F:pyridoxal phosphate binding"/>
    <property type="evidence" value="ECO:0007669"/>
    <property type="project" value="InterPro"/>
</dbReference>
<dbReference type="GO" id="GO:0009000">
    <property type="term" value="F:selenocysteine lyase activity"/>
    <property type="evidence" value="ECO:0007669"/>
    <property type="project" value="UniProtKB-UniRule"/>
</dbReference>
<dbReference type="GO" id="GO:0006534">
    <property type="term" value="P:cysteine metabolic process"/>
    <property type="evidence" value="ECO:0007669"/>
    <property type="project" value="InterPro"/>
</dbReference>
<dbReference type="CDD" id="cd06453">
    <property type="entry name" value="SufS_like"/>
    <property type="match status" value="1"/>
</dbReference>
<dbReference type="Gene3D" id="3.90.1150.10">
    <property type="entry name" value="Aspartate Aminotransferase, domain 1"/>
    <property type="match status" value="1"/>
</dbReference>
<dbReference type="Gene3D" id="3.40.640.10">
    <property type="entry name" value="Type I PLP-dependent aspartate aminotransferase-like (Major domain)"/>
    <property type="match status" value="1"/>
</dbReference>
<dbReference type="HAMAP" id="MF_01831">
    <property type="entry name" value="SufS_aminotrans_5"/>
    <property type="match status" value="1"/>
</dbReference>
<dbReference type="InterPro" id="IPR000192">
    <property type="entry name" value="Aminotrans_V_dom"/>
</dbReference>
<dbReference type="InterPro" id="IPR020578">
    <property type="entry name" value="Aminotrans_V_PyrdxlP_BS"/>
</dbReference>
<dbReference type="InterPro" id="IPR010970">
    <property type="entry name" value="Cys_dSase_SufS"/>
</dbReference>
<dbReference type="InterPro" id="IPR015424">
    <property type="entry name" value="PyrdxlP-dep_Trfase"/>
</dbReference>
<dbReference type="InterPro" id="IPR015421">
    <property type="entry name" value="PyrdxlP-dep_Trfase_major"/>
</dbReference>
<dbReference type="InterPro" id="IPR015422">
    <property type="entry name" value="PyrdxlP-dep_Trfase_small"/>
</dbReference>
<dbReference type="NCBIfam" id="NF006791">
    <property type="entry name" value="PRK09295.1"/>
    <property type="match status" value="1"/>
</dbReference>
<dbReference type="NCBIfam" id="TIGR01979">
    <property type="entry name" value="sufS"/>
    <property type="match status" value="1"/>
</dbReference>
<dbReference type="PANTHER" id="PTHR43586">
    <property type="entry name" value="CYSTEINE DESULFURASE"/>
    <property type="match status" value="1"/>
</dbReference>
<dbReference type="PANTHER" id="PTHR43586:SF25">
    <property type="entry name" value="CYSTEINE DESULFURASE"/>
    <property type="match status" value="1"/>
</dbReference>
<dbReference type="Pfam" id="PF00266">
    <property type="entry name" value="Aminotran_5"/>
    <property type="match status" value="1"/>
</dbReference>
<dbReference type="SUPFAM" id="SSF53383">
    <property type="entry name" value="PLP-dependent transferases"/>
    <property type="match status" value="1"/>
</dbReference>
<dbReference type="PROSITE" id="PS00595">
    <property type="entry name" value="AA_TRANSFER_CLASS_5"/>
    <property type="match status" value="1"/>
</dbReference>
<organism>
    <name type="scientific">Yersinia pestis bv. Antiqua (strain Angola)</name>
    <dbReference type="NCBI Taxonomy" id="349746"/>
    <lineage>
        <taxon>Bacteria</taxon>
        <taxon>Pseudomonadati</taxon>
        <taxon>Pseudomonadota</taxon>
        <taxon>Gammaproteobacteria</taxon>
        <taxon>Enterobacterales</taxon>
        <taxon>Yersiniaceae</taxon>
        <taxon>Yersinia</taxon>
    </lineage>
</organism>
<gene>
    <name evidence="1" type="primary">sufS</name>
    <name type="ordered locus">YpAngola_A2590</name>
</gene>
<reference key="1">
    <citation type="journal article" date="2010" name="J. Bacteriol.">
        <title>Genome sequence of the deep-rooted Yersinia pestis strain Angola reveals new insights into the evolution and pangenome of the plague bacterium.</title>
        <authorList>
            <person name="Eppinger M."/>
            <person name="Worsham P.L."/>
            <person name="Nikolich M.P."/>
            <person name="Riley D.R."/>
            <person name="Sebastian Y."/>
            <person name="Mou S."/>
            <person name="Achtman M."/>
            <person name="Lindler L.E."/>
            <person name="Ravel J."/>
        </authorList>
    </citation>
    <scope>NUCLEOTIDE SEQUENCE [LARGE SCALE GENOMIC DNA]</scope>
    <source>
        <strain>Angola</strain>
    </source>
</reference>
<feature type="chain" id="PRO_1000188314" description="Cysteine desulfurase">
    <location>
        <begin position="1"/>
        <end position="406"/>
    </location>
</feature>
<feature type="active site" description="Cysteine persulfide intermediate" evidence="1">
    <location>
        <position position="364"/>
    </location>
</feature>
<feature type="modified residue" description="N6-(pyridoxal phosphate)lysine" evidence="1">
    <location>
        <position position="226"/>
    </location>
</feature>
<proteinExistence type="inferred from homology"/>
<accession>A9QZC9</accession>
<name>SUFS_YERPG</name>
<protein>
    <recommendedName>
        <fullName evidence="1">Cysteine desulfurase</fullName>
        <ecNumber evidence="1">2.8.1.7</ecNumber>
    </recommendedName>
    <alternativeName>
        <fullName evidence="1">Selenocysteine beta-lyase</fullName>
        <shortName evidence="1">SCL</shortName>
    </alternativeName>
    <alternativeName>
        <fullName evidence="1">Selenocysteine lyase</fullName>
        <ecNumber evidence="1">4.4.1.16</ecNumber>
    </alternativeName>
    <alternativeName>
        <fullName evidence="1">Selenocysteine reductase</fullName>
    </alternativeName>
</protein>